<accession>B5F959</accession>
<dbReference type="EC" id="2.1.-.-" evidence="1"/>
<dbReference type="EMBL" id="CP001138">
    <property type="protein sequence ID" value="ACH48893.1"/>
    <property type="molecule type" value="Genomic_DNA"/>
</dbReference>
<dbReference type="RefSeq" id="WP_000100069.1">
    <property type="nucleotide sequence ID" value="NC_011149.1"/>
</dbReference>
<dbReference type="KEGG" id="sea:SeAg_B2040"/>
<dbReference type="HOGENOM" id="CLU_036182_2_0_6"/>
<dbReference type="UniPathway" id="UPA00637"/>
<dbReference type="Proteomes" id="UP000008819">
    <property type="component" value="Chromosome"/>
</dbReference>
<dbReference type="GO" id="GO:0005886">
    <property type="term" value="C:plasma membrane"/>
    <property type="evidence" value="ECO:0007669"/>
    <property type="project" value="UniProtKB-SubCell"/>
</dbReference>
<dbReference type="GO" id="GO:0016747">
    <property type="term" value="F:acyltransferase activity, transferring groups other than amino-acyl groups"/>
    <property type="evidence" value="ECO:0007669"/>
    <property type="project" value="InterPro"/>
</dbReference>
<dbReference type="GO" id="GO:0016741">
    <property type="term" value="F:transferase activity, transferring one-carbon groups"/>
    <property type="evidence" value="ECO:0007669"/>
    <property type="project" value="UniProtKB-UniRule"/>
</dbReference>
<dbReference type="GO" id="GO:0009250">
    <property type="term" value="P:glucan biosynthetic process"/>
    <property type="evidence" value="ECO:0007669"/>
    <property type="project" value="UniProtKB-UniRule"/>
</dbReference>
<dbReference type="HAMAP" id="MF_01066">
    <property type="entry name" value="MdoC_OpgC"/>
    <property type="match status" value="1"/>
</dbReference>
<dbReference type="InterPro" id="IPR002656">
    <property type="entry name" value="Acyl_transf_3_dom"/>
</dbReference>
<dbReference type="InterPro" id="IPR050623">
    <property type="entry name" value="Glucan_succinyl_AcylTrfase"/>
</dbReference>
<dbReference type="InterPro" id="IPR023723">
    <property type="entry name" value="Glucans_biosynth_C"/>
</dbReference>
<dbReference type="NCBIfam" id="NF003014">
    <property type="entry name" value="PRK03854.1"/>
    <property type="match status" value="1"/>
</dbReference>
<dbReference type="PANTHER" id="PTHR36927">
    <property type="entry name" value="BLR4337 PROTEIN"/>
    <property type="match status" value="1"/>
</dbReference>
<dbReference type="PANTHER" id="PTHR36927:SF3">
    <property type="entry name" value="GLUCANS BIOSYNTHESIS PROTEIN C"/>
    <property type="match status" value="1"/>
</dbReference>
<dbReference type="Pfam" id="PF01757">
    <property type="entry name" value="Acyl_transf_3"/>
    <property type="match status" value="1"/>
</dbReference>
<evidence type="ECO:0000255" key="1">
    <source>
        <dbReference type="HAMAP-Rule" id="MF_01066"/>
    </source>
</evidence>
<feature type="chain" id="PRO_1000136570" description="Glucans biosynthesis protein C">
    <location>
        <begin position="1"/>
        <end position="384"/>
    </location>
</feature>
<feature type="transmembrane region" description="Helical" evidence="1">
    <location>
        <begin position="17"/>
        <end position="37"/>
    </location>
</feature>
<feature type="transmembrane region" description="Helical" evidence="1">
    <location>
        <begin position="54"/>
        <end position="74"/>
    </location>
</feature>
<feature type="transmembrane region" description="Helical" evidence="1">
    <location>
        <begin position="91"/>
        <end position="111"/>
    </location>
</feature>
<feature type="transmembrane region" description="Helical" evidence="1">
    <location>
        <begin position="140"/>
        <end position="160"/>
    </location>
</feature>
<feature type="transmembrane region" description="Helical" evidence="1">
    <location>
        <begin position="173"/>
        <end position="193"/>
    </location>
</feature>
<feature type="transmembrane region" description="Helical" evidence="1">
    <location>
        <begin position="212"/>
        <end position="232"/>
    </location>
</feature>
<feature type="transmembrane region" description="Helical" evidence="1">
    <location>
        <begin position="240"/>
        <end position="260"/>
    </location>
</feature>
<feature type="transmembrane region" description="Helical" evidence="1">
    <location>
        <begin position="274"/>
        <end position="294"/>
    </location>
</feature>
<feature type="transmembrane region" description="Helical" evidence="1">
    <location>
        <begin position="311"/>
        <end position="331"/>
    </location>
</feature>
<feature type="transmembrane region" description="Helical" evidence="1">
    <location>
        <begin position="338"/>
        <end position="358"/>
    </location>
</feature>
<protein>
    <recommendedName>
        <fullName evidence="1">Glucans biosynthesis protein C</fullName>
        <ecNumber evidence="1">2.1.-.-</ecNumber>
    </recommendedName>
</protein>
<proteinExistence type="inferred from homology"/>
<keyword id="KW-0012">Acyltransferase</keyword>
<keyword id="KW-1003">Cell membrane</keyword>
<keyword id="KW-0472">Membrane</keyword>
<keyword id="KW-0808">Transferase</keyword>
<keyword id="KW-0812">Transmembrane</keyword>
<keyword id="KW-1133">Transmembrane helix</keyword>
<name>OPGC_SALA4</name>
<comment type="function">
    <text evidence="1">Necessary for the succinyl substitution of periplasmic glucans. Could catalyze the transfer of succinyl residues from the cytoplasmic side of the membrane to the nascent glucan backbones on the periplasmic side of the membrane.</text>
</comment>
<comment type="pathway">
    <text evidence="1">Glycan metabolism; osmoregulated periplasmic glucan (OPG) biosynthesis.</text>
</comment>
<comment type="subcellular location">
    <subcellularLocation>
        <location evidence="1">Cell membrane</location>
        <topology evidence="1">Multi-pass membrane protein</topology>
    </subcellularLocation>
</comment>
<comment type="similarity">
    <text evidence="1">Belongs to the acyltransferase 3 family. OpgC subfamily.</text>
</comment>
<gene>
    <name evidence="1" type="primary">mdoC</name>
    <name evidence="1" type="synonym">opgC</name>
    <name type="ordered locus">SeAg_B2040</name>
</gene>
<organism>
    <name type="scientific">Salmonella agona (strain SL483)</name>
    <dbReference type="NCBI Taxonomy" id="454166"/>
    <lineage>
        <taxon>Bacteria</taxon>
        <taxon>Pseudomonadati</taxon>
        <taxon>Pseudomonadota</taxon>
        <taxon>Gammaproteobacteria</taxon>
        <taxon>Enterobacterales</taxon>
        <taxon>Enterobacteriaceae</taxon>
        <taxon>Salmonella</taxon>
    </lineage>
</organism>
<sequence>MSSVPAPREYFLDSIRAWLMLLGIPFHISLIYSTHSWHVNSATPSWWLTLFNDFIHAFRMQVFFVISGYFSYMLFLRYPLKRWWKVRVERVGIPMLTAIPLLTLPQFILLQYVKEKTENWPTLSAYEKYNTLAWELISHLWFLLVLVILTTVSIGIFTWFQKRQETSKPRPAAISLARLSLIFFLLGMAYAAIRRIIFIVYPAILSDGMFNFIVMQTLFYVPFFILGALAFIHPDLKARFTTPSRGCTLGAAVAFIAYLLNQRYGSGDAWMYETESVITMVMGLWMVNVVFSLGHRLLNFQSARVTYFVNASLFIYLVHHPLTLFFGAYITPHISSNLIGFLCGLIFVMGIALILYEIHLRIPLLKFLFSGKPPVKQESRAAIG</sequence>
<reference key="1">
    <citation type="journal article" date="2011" name="J. Bacteriol.">
        <title>Comparative genomics of 28 Salmonella enterica isolates: evidence for CRISPR-mediated adaptive sublineage evolution.</title>
        <authorList>
            <person name="Fricke W.F."/>
            <person name="Mammel M.K."/>
            <person name="McDermott P.F."/>
            <person name="Tartera C."/>
            <person name="White D.G."/>
            <person name="Leclerc J.E."/>
            <person name="Ravel J."/>
            <person name="Cebula T.A."/>
        </authorList>
    </citation>
    <scope>NUCLEOTIDE SEQUENCE [LARGE SCALE GENOMIC DNA]</scope>
    <source>
        <strain>SL483</strain>
    </source>
</reference>